<proteinExistence type="inferred from homology"/>
<comment type="function">
    <text evidence="1">Modulates RecA activity.</text>
</comment>
<comment type="subcellular location">
    <subcellularLocation>
        <location evidence="1">Cytoplasm</location>
    </subcellularLocation>
</comment>
<comment type="similarity">
    <text evidence="1">Belongs to the RecX family.</text>
</comment>
<accession>Q49YR8</accession>
<dbReference type="EMBL" id="AP008934">
    <property type="protein sequence ID" value="BAE18065.1"/>
    <property type="molecule type" value="Genomic_DNA"/>
</dbReference>
<dbReference type="RefSeq" id="WP_011302788.1">
    <property type="nucleotide sequence ID" value="NZ_MTGA01000031.1"/>
</dbReference>
<dbReference type="SMR" id="Q49YR8"/>
<dbReference type="GeneID" id="3616823"/>
<dbReference type="KEGG" id="ssp:SSP0920"/>
<dbReference type="PATRIC" id="fig|342451.11.peg.919"/>
<dbReference type="eggNOG" id="COG2137">
    <property type="taxonomic scope" value="Bacteria"/>
</dbReference>
<dbReference type="HOGENOM" id="CLU_066607_4_0_9"/>
<dbReference type="OrthoDB" id="5421057at2"/>
<dbReference type="Proteomes" id="UP000006371">
    <property type="component" value="Chromosome"/>
</dbReference>
<dbReference type="GO" id="GO:0005737">
    <property type="term" value="C:cytoplasm"/>
    <property type="evidence" value="ECO:0007669"/>
    <property type="project" value="UniProtKB-SubCell"/>
</dbReference>
<dbReference type="GO" id="GO:0006282">
    <property type="term" value="P:regulation of DNA repair"/>
    <property type="evidence" value="ECO:0007669"/>
    <property type="project" value="UniProtKB-UniRule"/>
</dbReference>
<dbReference type="Gene3D" id="1.10.10.10">
    <property type="entry name" value="Winged helix-like DNA-binding domain superfamily/Winged helix DNA-binding domain"/>
    <property type="match status" value="4"/>
</dbReference>
<dbReference type="HAMAP" id="MF_01114">
    <property type="entry name" value="RecX"/>
    <property type="match status" value="1"/>
</dbReference>
<dbReference type="InterPro" id="IPR053926">
    <property type="entry name" value="RecX_HTH_1st"/>
</dbReference>
<dbReference type="InterPro" id="IPR053925">
    <property type="entry name" value="RecX_HTH_3rd"/>
</dbReference>
<dbReference type="InterPro" id="IPR003783">
    <property type="entry name" value="Regulatory_RecX"/>
</dbReference>
<dbReference type="InterPro" id="IPR036388">
    <property type="entry name" value="WH-like_DNA-bd_sf"/>
</dbReference>
<dbReference type="NCBIfam" id="NF010733">
    <property type="entry name" value="PRK14135.1"/>
    <property type="match status" value="1"/>
</dbReference>
<dbReference type="PANTHER" id="PTHR33602">
    <property type="entry name" value="REGULATORY PROTEIN RECX FAMILY PROTEIN"/>
    <property type="match status" value="1"/>
</dbReference>
<dbReference type="PANTHER" id="PTHR33602:SF1">
    <property type="entry name" value="REGULATORY PROTEIN RECX FAMILY PROTEIN"/>
    <property type="match status" value="1"/>
</dbReference>
<dbReference type="Pfam" id="PF21982">
    <property type="entry name" value="RecX_HTH1"/>
    <property type="match status" value="1"/>
</dbReference>
<dbReference type="Pfam" id="PF21981">
    <property type="entry name" value="RecX_HTH3"/>
    <property type="match status" value="2"/>
</dbReference>
<organism>
    <name type="scientific">Staphylococcus saprophyticus subsp. saprophyticus (strain ATCC 15305 / DSM 20229 / NCIMB 8711 / NCTC 7292 / S-41)</name>
    <dbReference type="NCBI Taxonomy" id="342451"/>
    <lineage>
        <taxon>Bacteria</taxon>
        <taxon>Bacillati</taxon>
        <taxon>Bacillota</taxon>
        <taxon>Bacilli</taxon>
        <taxon>Bacillales</taxon>
        <taxon>Staphylococcaceae</taxon>
        <taxon>Staphylococcus</taxon>
    </lineage>
</organism>
<protein>
    <recommendedName>
        <fullName evidence="1">Regulatory protein RecX</fullName>
    </recommendedName>
</protein>
<sequence>MPKITKIEVQKKNKERFNLYLDEEFEMGIDMDTYVHFNLKKGQIVDAADMEKIQKYDQYRQAVNVAIQFLSYRKRTDHEVIQHLQKKEISESVIASVIDYCHEQRLIDHEDYANSLKNTMILTTDKGPGIFRQKLRDAGVEQTIIDVYAERYENEQPMEDIIKVANKILKQKKGPTVKRKEKLSQALMQKGYSFEIIKVVMDEMDFSQPEAELDGLLQQELEKVYNKYSRKFSGRKLINKTIEGLMRKGYKYDKIKAKLEESGIVDGTEEIE</sequence>
<gene>
    <name evidence="1" type="primary">recX</name>
    <name type="ordered locus">SSP0920</name>
</gene>
<name>RECX_STAS1</name>
<reference key="1">
    <citation type="journal article" date="2005" name="Proc. Natl. Acad. Sci. U.S.A.">
        <title>Whole genome sequence of Staphylococcus saprophyticus reveals the pathogenesis of uncomplicated urinary tract infection.</title>
        <authorList>
            <person name="Kuroda M."/>
            <person name="Yamashita A."/>
            <person name="Hirakawa H."/>
            <person name="Kumano M."/>
            <person name="Morikawa K."/>
            <person name="Higashide M."/>
            <person name="Maruyama A."/>
            <person name="Inose Y."/>
            <person name="Matoba K."/>
            <person name="Toh H."/>
            <person name="Kuhara S."/>
            <person name="Hattori M."/>
            <person name="Ohta T."/>
        </authorList>
    </citation>
    <scope>NUCLEOTIDE SEQUENCE [LARGE SCALE GENOMIC DNA]</scope>
    <source>
        <strain>ATCC 15305 / DSM 20229 / NCIMB 8711 / NCTC 7292 / S-41</strain>
    </source>
</reference>
<feature type="chain" id="PRO_1000065212" description="Regulatory protein RecX">
    <location>
        <begin position="1"/>
        <end position="272"/>
    </location>
</feature>
<keyword id="KW-0963">Cytoplasm</keyword>
<keyword id="KW-1185">Reference proteome</keyword>
<evidence type="ECO:0000255" key="1">
    <source>
        <dbReference type="HAMAP-Rule" id="MF_01114"/>
    </source>
</evidence>